<name>RL30E_THEKO</name>
<feature type="chain" id="PRO_0000146157" description="Large ribosomal subunit protein eL30">
    <location>
        <begin position="1"/>
        <end position="102"/>
    </location>
</feature>
<keyword id="KW-0002">3D-structure</keyword>
<keyword id="KW-1185">Reference proteome</keyword>
<keyword id="KW-0687">Ribonucleoprotein</keyword>
<keyword id="KW-0689">Ribosomal protein</keyword>
<gene>
    <name evidence="1" type="primary">rpl30e</name>
    <name type="ordered locus">TK1080</name>
</gene>
<protein>
    <recommendedName>
        <fullName evidence="1">Large ribosomal subunit protein eL30</fullName>
    </recommendedName>
    <alternativeName>
        <fullName evidence="3">50S ribosomal protein L30e</fullName>
    </alternativeName>
</protein>
<reference key="1">
    <citation type="journal article" date="2005" name="Genome Res.">
        <title>Complete genome sequence of the hyperthermophilic archaeon Thermococcus kodakaraensis KOD1 and comparison with Pyrococcus genomes.</title>
        <authorList>
            <person name="Fukui T."/>
            <person name="Atomi H."/>
            <person name="Kanai T."/>
            <person name="Matsumi R."/>
            <person name="Fujiwara S."/>
            <person name="Imanaka T."/>
        </authorList>
    </citation>
    <scope>NUCLEOTIDE SEQUENCE [LARGE SCALE GENOMIC DNA]</scope>
    <source>
        <strain>ATCC BAA-918 / JCM 12380 / KOD1</strain>
    </source>
</reference>
<reference evidence="4 5 6" key="2">
    <citation type="journal article" date="2020" name="Nature">
        <title>Dynamic RNA acetylation revealed by quantitative cross-evolutionary mapping.</title>
        <authorList>
            <person name="Sas-Chen A."/>
            <person name="Thomas J.M."/>
            <person name="Matzov D."/>
            <person name="Taoka M."/>
            <person name="Nance K.D."/>
            <person name="Nir R."/>
            <person name="Bryson K.M."/>
            <person name="Shachar R."/>
            <person name="Liman G.L.S."/>
            <person name="Burkhart B.W."/>
            <person name="Gamage S.T."/>
            <person name="Nobe Y."/>
            <person name="Briney C.A."/>
            <person name="Levy M.J."/>
            <person name="Fuchs R.T."/>
            <person name="Robb G.B."/>
            <person name="Hartmann J."/>
            <person name="Sharma S."/>
            <person name="Lin Q."/>
            <person name="Florens L."/>
            <person name="Washburn M.P."/>
            <person name="Isobe T."/>
            <person name="Santangelo T.J."/>
            <person name="Shalev-Benami M."/>
            <person name="Meier J.L."/>
            <person name="Schwartz S."/>
        </authorList>
    </citation>
    <scope>STRUCTURE BY ELECTRON MICROSCOPY (2.55 ANGSTROMS) IN 70S RIBOSOME</scope>
    <source>
        <strain>ATCC BAA-918 / TS559</strain>
    </source>
</reference>
<sequence length="102" mass="10957">MVDFAFELRKVQDTGKIVMGAKKSIHLAKVGGAKLIIVARNARPDIKEDIYYYAKLSGIPVYEFEGTSVELGTLLGRPHTVSALAVIDPGESKILALAGGKE</sequence>
<accession>Q5JE35</accession>
<comment type="subunit">
    <text evidence="2">Part of the 50S ribosomal subunit.</text>
</comment>
<comment type="similarity">
    <text evidence="1">Belongs to the eukaryotic ribosomal protein eL30 family.</text>
</comment>
<proteinExistence type="evidence at protein level"/>
<organism>
    <name type="scientific">Thermococcus kodakarensis (strain ATCC BAA-918 / JCM 12380 / KOD1)</name>
    <name type="common">Pyrococcus kodakaraensis (strain KOD1)</name>
    <dbReference type="NCBI Taxonomy" id="69014"/>
    <lineage>
        <taxon>Archaea</taxon>
        <taxon>Methanobacteriati</taxon>
        <taxon>Methanobacteriota</taxon>
        <taxon>Thermococci</taxon>
        <taxon>Thermococcales</taxon>
        <taxon>Thermococcaceae</taxon>
        <taxon>Thermococcus</taxon>
    </lineage>
</organism>
<evidence type="ECO:0000255" key="1">
    <source>
        <dbReference type="HAMAP-Rule" id="MF_00481"/>
    </source>
</evidence>
<evidence type="ECO:0000269" key="2">
    <source>
    </source>
</evidence>
<evidence type="ECO:0000305" key="3"/>
<evidence type="ECO:0007744" key="4">
    <source>
        <dbReference type="PDB" id="6SKF"/>
    </source>
</evidence>
<evidence type="ECO:0007744" key="5">
    <source>
        <dbReference type="PDB" id="6SKG"/>
    </source>
</evidence>
<evidence type="ECO:0007744" key="6">
    <source>
        <dbReference type="PDB" id="6TH6"/>
    </source>
</evidence>
<dbReference type="EMBL" id="AP006878">
    <property type="protein sequence ID" value="BAD85269.1"/>
    <property type="molecule type" value="Genomic_DNA"/>
</dbReference>
<dbReference type="RefSeq" id="WP_011250031.1">
    <property type="nucleotide sequence ID" value="NC_006624.1"/>
</dbReference>
<dbReference type="PDB" id="6SKF">
    <property type="method" value="EM"/>
    <property type="resolution" value="2.95 A"/>
    <property type="chains" value="Bb=1-102"/>
</dbReference>
<dbReference type="PDB" id="6SKG">
    <property type="method" value="EM"/>
    <property type="resolution" value="2.65 A"/>
    <property type="chains" value="Bb=1-102"/>
</dbReference>
<dbReference type="PDB" id="6TH6">
    <property type="method" value="EM"/>
    <property type="resolution" value="2.55 A"/>
    <property type="chains" value="Bb=1-102"/>
</dbReference>
<dbReference type="PDBsum" id="6SKF"/>
<dbReference type="PDBsum" id="6SKG"/>
<dbReference type="PDBsum" id="6TH6"/>
<dbReference type="EMDB" id="EMD-10223"/>
<dbReference type="EMDB" id="EMD-10224"/>
<dbReference type="EMDB" id="EMD-10503"/>
<dbReference type="SMR" id="Q5JE35"/>
<dbReference type="FunCoup" id="Q5JE35">
    <property type="interactions" value="153"/>
</dbReference>
<dbReference type="STRING" id="69014.TK1080"/>
<dbReference type="EnsemblBacteria" id="BAD85269">
    <property type="protein sequence ID" value="BAD85269"/>
    <property type="gene ID" value="TK1080"/>
</dbReference>
<dbReference type="GeneID" id="78447593"/>
<dbReference type="KEGG" id="tko:TK1080"/>
<dbReference type="PATRIC" id="fig|69014.16.peg.1056"/>
<dbReference type="eggNOG" id="arCOG01752">
    <property type="taxonomic scope" value="Archaea"/>
</dbReference>
<dbReference type="HOGENOM" id="CLU_130502_1_0_2"/>
<dbReference type="InParanoid" id="Q5JE35"/>
<dbReference type="OrthoDB" id="10759at2157"/>
<dbReference type="PhylomeDB" id="Q5JE35"/>
<dbReference type="Proteomes" id="UP000000536">
    <property type="component" value="Chromosome"/>
</dbReference>
<dbReference type="GO" id="GO:0022625">
    <property type="term" value="C:cytosolic large ribosomal subunit"/>
    <property type="evidence" value="ECO:0000318"/>
    <property type="project" value="GO_Central"/>
</dbReference>
<dbReference type="GO" id="GO:0003723">
    <property type="term" value="F:RNA binding"/>
    <property type="evidence" value="ECO:0000318"/>
    <property type="project" value="GO_Central"/>
</dbReference>
<dbReference type="GO" id="GO:0003735">
    <property type="term" value="F:structural constituent of ribosome"/>
    <property type="evidence" value="ECO:0000318"/>
    <property type="project" value="GO_Central"/>
</dbReference>
<dbReference type="GO" id="GO:0006412">
    <property type="term" value="P:translation"/>
    <property type="evidence" value="ECO:0007669"/>
    <property type="project" value="UniProtKB-UniRule"/>
</dbReference>
<dbReference type="FunFam" id="3.30.1330.30:FF:000053">
    <property type="entry name" value="50S ribosomal protein L30e"/>
    <property type="match status" value="1"/>
</dbReference>
<dbReference type="Gene3D" id="3.30.1330.30">
    <property type="match status" value="1"/>
</dbReference>
<dbReference type="HAMAP" id="MF_00481">
    <property type="entry name" value="Ribosomal_eL30"/>
    <property type="match status" value="1"/>
</dbReference>
<dbReference type="InterPro" id="IPR000231">
    <property type="entry name" value="Ribosomal_eL30"/>
</dbReference>
<dbReference type="InterPro" id="IPR039109">
    <property type="entry name" value="Ribosomal_eL30-like"/>
</dbReference>
<dbReference type="InterPro" id="IPR029064">
    <property type="entry name" value="Ribosomal_eL30-like_sf"/>
</dbReference>
<dbReference type="InterPro" id="IPR022991">
    <property type="entry name" value="Ribosomal_eL30_CS"/>
</dbReference>
<dbReference type="InterPro" id="IPR004038">
    <property type="entry name" value="Ribosomal_eL8/eL30/eS12/Gad45"/>
</dbReference>
<dbReference type="NCBIfam" id="NF002172">
    <property type="entry name" value="PRK01018.1"/>
    <property type="match status" value="1"/>
</dbReference>
<dbReference type="PANTHER" id="PTHR11449">
    <property type="entry name" value="RIBOSOMAL PROTEIN L30"/>
    <property type="match status" value="1"/>
</dbReference>
<dbReference type="Pfam" id="PF01248">
    <property type="entry name" value="Ribosomal_L7Ae"/>
    <property type="match status" value="1"/>
</dbReference>
<dbReference type="SUPFAM" id="SSF55315">
    <property type="entry name" value="L30e-like"/>
    <property type="match status" value="1"/>
</dbReference>
<dbReference type="PROSITE" id="PS00993">
    <property type="entry name" value="RIBOSOMAL_L30E_2"/>
    <property type="match status" value="1"/>
</dbReference>